<name>FZF1_YEAST</name>
<comment type="function">
    <text>May function as a transcription factor.</text>
</comment>
<comment type="subcellular location">
    <subcellularLocation>
        <location evidence="5">Nucleus</location>
    </subcellularLocation>
</comment>
<comment type="miscellaneous">
    <text evidence="4">Present with 2120 molecules/cell in log phase SD medium.</text>
</comment>
<comment type="sequence caution" evidence="5">
    <conflict type="erroneous gene model prediction">
        <sequence resource="EMBL-CDS" id="CAA47998"/>
    </conflict>
</comment>
<proteinExistence type="evidence at protein level"/>
<dbReference type="EMBL" id="X67787">
    <property type="protein sequence ID" value="CAA47998.1"/>
    <property type="status" value="ALT_SEQ"/>
    <property type="molecule type" value="Genomic_DNA"/>
</dbReference>
<dbReference type="EMBL" id="X78104">
    <property type="protein sequence ID" value="CAA54996.1"/>
    <property type="molecule type" value="Genomic_DNA"/>
</dbReference>
<dbReference type="EMBL" id="AY949902">
    <property type="protein sequence ID" value="AAY27304.1"/>
    <property type="molecule type" value="Genomic_DNA"/>
</dbReference>
<dbReference type="EMBL" id="AY949903">
    <property type="protein sequence ID" value="AAY27305.1"/>
    <property type="molecule type" value="Genomic_DNA"/>
</dbReference>
<dbReference type="EMBL" id="AY949905">
    <property type="protein sequence ID" value="AAY27307.1"/>
    <property type="molecule type" value="Genomic_DNA"/>
</dbReference>
<dbReference type="EMBL" id="AY949906">
    <property type="protein sequence ID" value="AAY27308.1"/>
    <property type="molecule type" value="Genomic_DNA"/>
</dbReference>
<dbReference type="EMBL" id="AY949908">
    <property type="protein sequence ID" value="AAY27310.1"/>
    <property type="molecule type" value="Genomic_DNA"/>
</dbReference>
<dbReference type="EMBL" id="AY949909">
    <property type="protein sequence ID" value="AAY27311.1"/>
    <property type="molecule type" value="Genomic_DNA"/>
</dbReference>
<dbReference type="EMBL" id="AY949910">
    <property type="protein sequence ID" value="AAY27312.1"/>
    <property type="molecule type" value="Genomic_DNA"/>
</dbReference>
<dbReference type="EMBL" id="AY949911">
    <property type="protein sequence ID" value="AAY27313.1"/>
    <property type="molecule type" value="Genomic_DNA"/>
</dbReference>
<dbReference type="EMBL" id="AY949912">
    <property type="protein sequence ID" value="AAY27314.1"/>
    <property type="molecule type" value="Genomic_DNA"/>
</dbReference>
<dbReference type="EMBL" id="AY949913">
    <property type="protein sequence ID" value="AAY27315.1"/>
    <property type="molecule type" value="Genomic_DNA"/>
</dbReference>
<dbReference type="EMBL" id="AY949914">
    <property type="protein sequence ID" value="AAY27316.1"/>
    <property type="molecule type" value="Genomic_DNA"/>
</dbReference>
<dbReference type="EMBL" id="AY949915">
    <property type="protein sequence ID" value="AAY27317.1"/>
    <property type="molecule type" value="Genomic_DNA"/>
</dbReference>
<dbReference type="EMBL" id="AY949916">
    <property type="protein sequence ID" value="AAY27318.1"/>
    <property type="molecule type" value="Genomic_DNA"/>
</dbReference>
<dbReference type="EMBL" id="AY949917">
    <property type="protein sequence ID" value="AAY27319.1"/>
    <property type="molecule type" value="Genomic_DNA"/>
</dbReference>
<dbReference type="EMBL" id="AY949918">
    <property type="protein sequence ID" value="AAY27320.1"/>
    <property type="molecule type" value="Genomic_DNA"/>
</dbReference>
<dbReference type="EMBL" id="AY949919">
    <property type="protein sequence ID" value="AAY27321.1"/>
    <property type="molecule type" value="Genomic_DNA"/>
</dbReference>
<dbReference type="EMBL" id="X94357">
    <property type="protein sequence ID" value="CAA64133.1"/>
    <property type="molecule type" value="Genomic_DNA"/>
</dbReference>
<dbReference type="EMBL" id="Z72776">
    <property type="protein sequence ID" value="CAA96974.1"/>
    <property type="molecule type" value="Genomic_DNA"/>
</dbReference>
<dbReference type="EMBL" id="BK006941">
    <property type="protein sequence ID" value="DAA07865.1"/>
    <property type="molecule type" value="Genomic_DNA"/>
</dbReference>
<dbReference type="PIR" id="S61607">
    <property type="entry name" value="S61607"/>
</dbReference>
<dbReference type="RefSeq" id="NP_011260.1">
    <property type="nucleotide sequence ID" value="NM_001181120.1"/>
</dbReference>
<dbReference type="SMR" id="P32805"/>
<dbReference type="BioGRID" id="33025">
    <property type="interactions" value="107"/>
</dbReference>
<dbReference type="DIP" id="DIP-1324N"/>
<dbReference type="FunCoup" id="P32805">
    <property type="interactions" value="347"/>
</dbReference>
<dbReference type="IntAct" id="P32805">
    <property type="interactions" value="9"/>
</dbReference>
<dbReference type="MINT" id="P32805"/>
<dbReference type="STRING" id="4932.YGL254W"/>
<dbReference type="iPTMnet" id="P32805"/>
<dbReference type="PaxDb" id="4932-YGL254W"/>
<dbReference type="PeptideAtlas" id="P32805"/>
<dbReference type="EnsemblFungi" id="YGL254W_mRNA">
    <property type="protein sequence ID" value="YGL254W"/>
    <property type="gene ID" value="YGL254W"/>
</dbReference>
<dbReference type="GeneID" id="852638"/>
<dbReference type="KEGG" id="sce:YGL254W"/>
<dbReference type="AGR" id="SGD:S000003223"/>
<dbReference type="SGD" id="S000003223">
    <property type="gene designation" value="FZF1"/>
</dbReference>
<dbReference type="VEuPathDB" id="FungiDB:YGL254W"/>
<dbReference type="eggNOG" id="KOG1721">
    <property type="taxonomic scope" value="Eukaryota"/>
</dbReference>
<dbReference type="HOGENOM" id="CLU_068955_0_0_1"/>
<dbReference type="InParanoid" id="P32805"/>
<dbReference type="OMA" id="QHRYSHT"/>
<dbReference type="OrthoDB" id="3437960at2759"/>
<dbReference type="BioCyc" id="YEAST:G3O-30723-MONOMER"/>
<dbReference type="BioGRID-ORCS" id="852638">
    <property type="hits" value="0 hits in 13 CRISPR screens"/>
</dbReference>
<dbReference type="PRO" id="PR:P32805"/>
<dbReference type="Proteomes" id="UP000002311">
    <property type="component" value="Chromosome VII"/>
</dbReference>
<dbReference type="RNAct" id="P32805">
    <property type="molecule type" value="protein"/>
</dbReference>
<dbReference type="GO" id="GO:0005634">
    <property type="term" value="C:nucleus"/>
    <property type="evidence" value="ECO:0000318"/>
    <property type="project" value="GO_Central"/>
</dbReference>
<dbReference type="GO" id="GO:0001228">
    <property type="term" value="F:DNA-binding transcription activator activity, RNA polymerase II-specific"/>
    <property type="evidence" value="ECO:0000314"/>
    <property type="project" value="SGD"/>
</dbReference>
<dbReference type="GO" id="GO:0000978">
    <property type="term" value="F:RNA polymerase II cis-regulatory region sequence-specific DNA binding"/>
    <property type="evidence" value="ECO:0000314"/>
    <property type="project" value="SGD"/>
</dbReference>
<dbReference type="GO" id="GO:0043565">
    <property type="term" value="F:sequence-specific DNA binding"/>
    <property type="evidence" value="ECO:0007005"/>
    <property type="project" value="SGD"/>
</dbReference>
<dbReference type="GO" id="GO:0008270">
    <property type="term" value="F:zinc ion binding"/>
    <property type="evidence" value="ECO:0007669"/>
    <property type="project" value="UniProtKB-KW"/>
</dbReference>
<dbReference type="GO" id="GO:0018890">
    <property type="term" value="P:cyanamide metabolic process"/>
    <property type="evidence" value="ECO:0000315"/>
    <property type="project" value="SGD"/>
</dbReference>
<dbReference type="GO" id="GO:0045944">
    <property type="term" value="P:positive regulation of transcription by RNA polymerase II"/>
    <property type="evidence" value="ECO:0000315"/>
    <property type="project" value="SGD"/>
</dbReference>
<dbReference type="GO" id="GO:0006357">
    <property type="term" value="P:regulation of transcription by RNA polymerase II"/>
    <property type="evidence" value="ECO:0000318"/>
    <property type="project" value="GO_Central"/>
</dbReference>
<dbReference type="FunFam" id="3.30.160.60:FF:000032">
    <property type="entry name" value="Krueppel-like factor 4"/>
    <property type="match status" value="1"/>
</dbReference>
<dbReference type="Gene3D" id="3.30.160.60">
    <property type="entry name" value="Classic Zinc Finger"/>
    <property type="match status" value="3"/>
</dbReference>
<dbReference type="InterPro" id="IPR051061">
    <property type="entry name" value="Zinc_finger_trans_reg"/>
</dbReference>
<dbReference type="InterPro" id="IPR036236">
    <property type="entry name" value="Znf_C2H2_sf"/>
</dbReference>
<dbReference type="InterPro" id="IPR013087">
    <property type="entry name" value="Znf_C2H2_type"/>
</dbReference>
<dbReference type="PANTHER" id="PTHR46179:SF13">
    <property type="entry name" value="C2H2-TYPE DOMAIN-CONTAINING PROTEIN"/>
    <property type="match status" value="1"/>
</dbReference>
<dbReference type="PANTHER" id="PTHR46179">
    <property type="entry name" value="ZINC FINGER PROTEIN"/>
    <property type="match status" value="1"/>
</dbReference>
<dbReference type="Pfam" id="PF00096">
    <property type="entry name" value="zf-C2H2"/>
    <property type="match status" value="1"/>
</dbReference>
<dbReference type="Pfam" id="PF13894">
    <property type="entry name" value="zf-C2H2_4"/>
    <property type="match status" value="1"/>
</dbReference>
<dbReference type="SMART" id="SM00355">
    <property type="entry name" value="ZnF_C2H2"/>
    <property type="match status" value="5"/>
</dbReference>
<dbReference type="SUPFAM" id="SSF57667">
    <property type="entry name" value="beta-beta-alpha zinc fingers"/>
    <property type="match status" value="2"/>
</dbReference>
<dbReference type="PROSITE" id="PS00028">
    <property type="entry name" value="ZINC_FINGER_C2H2_1"/>
    <property type="match status" value="3"/>
</dbReference>
<dbReference type="PROSITE" id="PS50157">
    <property type="entry name" value="ZINC_FINGER_C2H2_2"/>
    <property type="match status" value="3"/>
</dbReference>
<gene>
    <name type="primary">FZF1</name>
    <name type="synonym">SUL1</name>
    <name type="ordered locus">YGL254W</name>
    <name type="ORF">NCR299</name>
</gene>
<organism>
    <name type="scientific">Saccharomyces cerevisiae (strain ATCC 204508 / S288c)</name>
    <name type="common">Baker's yeast</name>
    <dbReference type="NCBI Taxonomy" id="559292"/>
    <lineage>
        <taxon>Eukaryota</taxon>
        <taxon>Fungi</taxon>
        <taxon>Dikarya</taxon>
        <taxon>Ascomycota</taxon>
        <taxon>Saccharomycotina</taxon>
        <taxon>Saccharomycetes</taxon>
        <taxon>Saccharomycetales</taxon>
        <taxon>Saccharomycetaceae</taxon>
        <taxon>Saccharomyces</taxon>
    </lineage>
</organism>
<protein>
    <recommendedName>
        <fullName>Zinc finger protein FZF1</fullName>
    </recommendedName>
    <alternativeName>
        <fullName>Sulfite resistance protein 1</fullName>
    </alternativeName>
</protein>
<reference key="1">
    <citation type="journal article" date="1993" name="Yeast">
        <title>Identification of a gene encoding a novel zinc finger protein in Saccharomyces cerevisiae.</title>
        <authorList>
            <person name="Breitwieser W."/>
            <person name="Price C."/>
            <person name="Schuster T."/>
        </authorList>
    </citation>
    <scope>NUCLEOTIDE SEQUENCE [GENOMIC DNA]</scope>
    <source>
        <strain>ATCC 200060 / W303</strain>
    </source>
</reference>
<reference key="2">
    <citation type="journal article" date="1994" name="Yeast">
        <title>Cloning and characterization of a sulphite-resistance gene of Saccharomyces cerevisiae.</title>
        <authorList>
            <person name="Casalone E."/>
            <person name="Colella C.M."/>
            <person name="Daly S."/>
            <person name="Fontana S."/>
            <person name="Torricelli I."/>
            <person name="Polsinelli M."/>
        </authorList>
    </citation>
    <scope>NUCLEOTIDE SEQUENCE [GENOMIC DNA]</scope>
    <source>
        <strain>ATCC 204508 / S288c</strain>
    </source>
</reference>
<reference key="3">
    <citation type="journal article" date="2006" name="FEMS Yeast Res.">
        <title>Population structure and gene evolution in Saccharomyces cerevisiae.</title>
        <authorList>
            <person name="Aa E."/>
            <person name="Townsend J.P."/>
            <person name="Adams R.I."/>
            <person name="Nielsen K.M."/>
            <person name="Taylor J.W."/>
        </authorList>
    </citation>
    <scope>NUCLEOTIDE SEQUENCE [GENOMIC DNA]</scope>
    <source>
        <strain>ATCC 76625 / YPH499</strain>
        <strain>MMW1-15</strain>
        <strain>MMW1-15h2</strain>
        <strain>MMW1-2</strain>
        <strain>MMW1-2h2</strain>
        <strain>Sgu52E</strain>
        <strain>Sgu52F</strain>
        <strain>YPS396</strain>
        <strain>YPS400</strain>
        <strain>YPS598</strain>
        <strain>YPS600</strain>
        <strain>YPS602</strain>
        <strain>YPS604</strain>
        <strain>YPS606</strain>
        <strain>YPS608</strain>
        <strain>YPS610</strain>
    </source>
</reference>
<reference key="4">
    <citation type="journal article" date="1996" name="Yeast">
        <title>Sequence of a 39,411 bp DNA fragment covering the left end of chromosome VII of Saccharomyces cerevisiae.</title>
        <authorList>
            <person name="Coissac E."/>
            <person name="Maillier E."/>
            <person name="Robineau S."/>
            <person name="Netter P."/>
        </authorList>
    </citation>
    <scope>NUCLEOTIDE SEQUENCE [GENOMIC DNA]</scope>
    <source>
        <strain>ATCC 96604 / S288c / FY1679</strain>
    </source>
</reference>
<reference key="5">
    <citation type="journal article" date="1997" name="Nature">
        <title>The nucleotide sequence of Saccharomyces cerevisiae chromosome VII.</title>
        <authorList>
            <person name="Tettelin H."/>
            <person name="Agostoni-Carbone M.L."/>
            <person name="Albermann K."/>
            <person name="Albers M."/>
            <person name="Arroyo J."/>
            <person name="Backes U."/>
            <person name="Barreiros T."/>
            <person name="Bertani I."/>
            <person name="Bjourson A.J."/>
            <person name="Brueckner M."/>
            <person name="Bruschi C.V."/>
            <person name="Carignani G."/>
            <person name="Castagnoli L."/>
            <person name="Cerdan E."/>
            <person name="Clemente M.L."/>
            <person name="Coblenz A."/>
            <person name="Coglievina M."/>
            <person name="Coissac E."/>
            <person name="Defoor E."/>
            <person name="Del Bino S."/>
            <person name="Delius H."/>
            <person name="Delneri D."/>
            <person name="de Wergifosse P."/>
            <person name="Dujon B."/>
            <person name="Durand P."/>
            <person name="Entian K.-D."/>
            <person name="Eraso P."/>
            <person name="Escribano V."/>
            <person name="Fabiani L."/>
            <person name="Fartmann B."/>
            <person name="Feroli F."/>
            <person name="Feuermann M."/>
            <person name="Frontali L."/>
            <person name="Garcia-Gonzalez M."/>
            <person name="Garcia-Saez M.I."/>
            <person name="Goffeau A."/>
            <person name="Guerreiro P."/>
            <person name="Hani J."/>
            <person name="Hansen M."/>
            <person name="Hebling U."/>
            <person name="Hernandez K."/>
            <person name="Heumann K."/>
            <person name="Hilger F."/>
            <person name="Hofmann B."/>
            <person name="Indge K.J."/>
            <person name="James C.M."/>
            <person name="Klima R."/>
            <person name="Koetter P."/>
            <person name="Kramer B."/>
            <person name="Kramer W."/>
            <person name="Lauquin G."/>
            <person name="Leuther H."/>
            <person name="Louis E.J."/>
            <person name="Maillier E."/>
            <person name="Marconi A."/>
            <person name="Martegani E."/>
            <person name="Mazon M.J."/>
            <person name="Mazzoni C."/>
            <person name="McReynolds A.D.K."/>
            <person name="Melchioretto P."/>
            <person name="Mewes H.-W."/>
            <person name="Minenkova O."/>
            <person name="Mueller-Auer S."/>
            <person name="Nawrocki A."/>
            <person name="Netter P."/>
            <person name="Neu R."/>
            <person name="Nombela C."/>
            <person name="Oliver S.G."/>
            <person name="Panzeri L."/>
            <person name="Paoluzi S."/>
            <person name="Plevani P."/>
            <person name="Portetelle D."/>
            <person name="Portillo F."/>
            <person name="Potier S."/>
            <person name="Purnelle B."/>
            <person name="Rieger M."/>
            <person name="Riles L."/>
            <person name="Rinaldi T."/>
            <person name="Robben J."/>
            <person name="Rodrigues-Pousada C."/>
            <person name="Rodriguez-Belmonte E."/>
            <person name="Rodriguez-Torres A.M."/>
            <person name="Rose M."/>
            <person name="Ruzzi M."/>
            <person name="Saliola M."/>
            <person name="Sanchez-Perez M."/>
            <person name="Schaefer B."/>
            <person name="Schaefer M."/>
            <person name="Scharfe M."/>
            <person name="Schmidheini T."/>
            <person name="Schreer A."/>
            <person name="Skala J."/>
            <person name="Souciet J.-L."/>
            <person name="Steensma H.Y."/>
            <person name="Talla E."/>
            <person name="Thierry A."/>
            <person name="Vandenbol M."/>
            <person name="van der Aart Q.J.M."/>
            <person name="Van Dyck L."/>
            <person name="Vanoni M."/>
            <person name="Verhasselt P."/>
            <person name="Voet M."/>
            <person name="Volckaert G."/>
            <person name="Wambutt R."/>
            <person name="Watson M.D."/>
            <person name="Weber N."/>
            <person name="Wedler E."/>
            <person name="Wedler H."/>
            <person name="Wipfli P."/>
            <person name="Wolf K."/>
            <person name="Wright L.F."/>
            <person name="Zaccaria P."/>
            <person name="Zimmermann M."/>
            <person name="Zollner A."/>
            <person name="Kleine K."/>
        </authorList>
    </citation>
    <scope>NUCLEOTIDE SEQUENCE [LARGE SCALE GENOMIC DNA]</scope>
    <source>
        <strain>ATCC 204508 / S288c</strain>
    </source>
</reference>
<reference key="6">
    <citation type="journal article" date="2014" name="G3 (Bethesda)">
        <title>The reference genome sequence of Saccharomyces cerevisiae: Then and now.</title>
        <authorList>
            <person name="Engel S.R."/>
            <person name="Dietrich F.S."/>
            <person name="Fisk D.G."/>
            <person name="Binkley G."/>
            <person name="Balakrishnan R."/>
            <person name="Costanzo M.C."/>
            <person name="Dwight S.S."/>
            <person name="Hitz B.C."/>
            <person name="Karra K."/>
            <person name="Nash R.S."/>
            <person name="Weng S."/>
            <person name="Wong E.D."/>
            <person name="Lloyd P."/>
            <person name="Skrzypek M.S."/>
            <person name="Miyasato S.R."/>
            <person name="Simison M."/>
            <person name="Cherry J.M."/>
        </authorList>
    </citation>
    <scope>GENOME REANNOTATION</scope>
    <source>
        <strain>ATCC 204508 / S288c</strain>
    </source>
</reference>
<reference key="7">
    <citation type="journal article" date="2003" name="Nature">
        <title>Global analysis of protein expression in yeast.</title>
        <authorList>
            <person name="Ghaemmaghami S."/>
            <person name="Huh W.-K."/>
            <person name="Bower K."/>
            <person name="Howson R.W."/>
            <person name="Belle A."/>
            <person name="Dephoure N."/>
            <person name="O'Shea E.K."/>
            <person name="Weissman J.S."/>
        </authorList>
    </citation>
    <scope>LEVEL OF PROTEIN EXPRESSION [LARGE SCALE ANALYSIS]</scope>
</reference>
<evidence type="ECO:0000255" key="1"/>
<evidence type="ECO:0000255" key="2">
    <source>
        <dbReference type="PROSITE-ProRule" id="PRU00042"/>
    </source>
</evidence>
<evidence type="ECO:0000256" key="3">
    <source>
        <dbReference type="SAM" id="MobiDB-lite"/>
    </source>
</evidence>
<evidence type="ECO:0000269" key="4">
    <source>
    </source>
</evidence>
<evidence type="ECO:0000305" key="5"/>
<keyword id="KW-0238">DNA-binding</keyword>
<keyword id="KW-0479">Metal-binding</keyword>
<keyword id="KW-0539">Nucleus</keyword>
<keyword id="KW-1185">Reference proteome</keyword>
<keyword id="KW-0677">Repeat</keyword>
<keyword id="KW-0804">Transcription</keyword>
<keyword id="KW-0805">Transcription regulation</keyword>
<keyword id="KW-0862">Zinc</keyword>
<keyword id="KW-0863">Zinc-finger</keyword>
<feature type="chain" id="PRO_0000046805" description="Zinc finger protein FZF1">
    <location>
        <begin position="1"/>
        <end position="299"/>
    </location>
</feature>
<feature type="zinc finger region" description="C2H2-type 1" evidence="2">
    <location>
        <begin position="12"/>
        <end position="36"/>
    </location>
</feature>
<feature type="zinc finger region" description="C2H2-type 2" evidence="2">
    <location>
        <begin position="42"/>
        <end position="66"/>
    </location>
</feature>
<feature type="zinc finger region" description="C2H2-type 3" evidence="2">
    <location>
        <begin position="72"/>
        <end position="94"/>
    </location>
</feature>
<feature type="zinc finger region" description="C2H2-type 4" evidence="2">
    <location>
        <begin position="155"/>
        <end position="179"/>
    </location>
</feature>
<feature type="zinc finger region" description="C2H2-type 5" evidence="2">
    <location>
        <begin position="246"/>
        <end position="271"/>
    </location>
</feature>
<feature type="region of interest" description="Disordered" evidence="3">
    <location>
        <begin position="191"/>
        <end position="242"/>
    </location>
</feature>
<feature type="short sequence motif" description="Nuclear localization signal" evidence="1">
    <location>
        <begin position="96"/>
        <end position="107"/>
    </location>
</feature>
<feature type="compositionally biased region" description="Low complexity" evidence="3">
    <location>
        <begin position="200"/>
        <end position="232"/>
    </location>
</feature>
<feature type="sequence variant" description="In strain: Sgu52E and Sgu52F.">
    <original>G</original>
    <variation>E</variation>
    <location>
        <position position="110"/>
    </location>
</feature>
<feature type="sequence variant" description="In strain: MMW1-15h2, MMW1-2h2, Sgu52E and Sgu52F.">
    <original>N</original>
    <variation>D</variation>
    <location>
        <position position="120"/>
    </location>
</feature>
<feature type="sequence variant" description="In strain: MMW1-15h2, MMW1-2h2, Sgu52E and Sgu52F.">
    <original>V</original>
    <variation>I</variation>
    <location>
        <position position="228"/>
    </location>
</feature>
<feature type="sequence variant" description="In strain: MMW1-15h2 and MMW1-2h2.">
    <original>D</original>
    <variation>N</variation>
    <location>
        <position position="238"/>
    </location>
</feature>
<feature type="sequence conflict" description="In Ref. 2; CAA54996." evidence="5" ref="2">
    <original>H</original>
    <variation>D</variation>
    <location>
        <position position="180"/>
    </location>
</feature>
<feature type="sequence conflict" description="In Ref. 1." evidence="5" ref="1">
    <original>T</original>
    <variation>W</variation>
    <location>
        <position position="235"/>
    </location>
</feature>
<feature type="sequence conflict" description="In Ref. 2; CAA54996." evidence="5" ref="2">
    <original>N</original>
    <variation>Y</variation>
    <location>
        <position position="246"/>
    </location>
</feature>
<accession>P32805</accession>
<accession>D6VV81</accession>
<accession>Q2VQB9</accession>
<accession>Q2VQC2</accession>
<accession>Q2VQC3</accession>
<sequence>MTDIGRTKSRNYKCSFDGCEKVYNRPSLLQQHQNSHTNQKPYHCDEPGCGKKFIRPCHLRVHKWTHSQIKPKACTLCQKRFVTNQQLRRHLNSHERKSKLASRIDRKHEGVNANVKAELNGKEGGFDPKLPSGSPMCGEEFSQGHLPGYDDMQVLQCPYKSCQKVTSFNDDLINHMLQHHIASKLVVPSGDPSLKESLPTSEKSSSTDTTSIPQLSFSTTGTSSSESVDSTTAQTPTDPESYWSDNRCKHSDCQELSPFASVFDLIDHYDHTHAFIPETLVKYSYIHLYKPSVWDLFEY</sequence>